<protein>
    <recommendedName>
        <fullName evidence="1">Large ribosomal subunit protein uL13</fullName>
    </recommendedName>
    <alternativeName>
        <fullName evidence="2">50S ribosomal protein L13</fullName>
    </alternativeName>
</protein>
<accession>Q49ZD6</accession>
<sequence>MRQTFMANESNIERKWYVIDAEGKTLGRLSSEVAAILRGKNKVTYTPHVDTGDYVIVINASKIHFTGNKERDKMYYRHSNHPGGIKSISAGELKANNPERLLENSIKGMLPSTRLGEKQGKKLFVYGGAEHPHTAQQPENYELRG</sequence>
<evidence type="ECO:0000255" key="1">
    <source>
        <dbReference type="HAMAP-Rule" id="MF_01366"/>
    </source>
</evidence>
<evidence type="ECO:0000305" key="2"/>
<proteinExistence type="inferred from homology"/>
<organism>
    <name type="scientific">Staphylococcus saprophyticus subsp. saprophyticus (strain ATCC 15305 / DSM 20229 / NCIMB 8711 / NCTC 7292 / S-41)</name>
    <dbReference type="NCBI Taxonomy" id="342451"/>
    <lineage>
        <taxon>Bacteria</taxon>
        <taxon>Bacillati</taxon>
        <taxon>Bacillota</taxon>
        <taxon>Bacilli</taxon>
        <taxon>Bacillales</taxon>
        <taxon>Staphylococcaceae</taxon>
        <taxon>Staphylococcus</taxon>
    </lineage>
</organism>
<reference key="1">
    <citation type="journal article" date="2005" name="Proc. Natl. Acad. Sci. U.S.A.">
        <title>Whole genome sequence of Staphylococcus saprophyticus reveals the pathogenesis of uncomplicated urinary tract infection.</title>
        <authorList>
            <person name="Kuroda M."/>
            <person name="Yamashita A."/>
            <person name="Hirakawa H."/>
            <person name="Kumano M."/>
            <person name="Morikawa K."/>
            <person name="Higashide M."/>
            <person name="Maruyama A."/>
            <person name="Inose Y."/>
            <person name="Matoba K."/>
            <person name="Toh H."/>
            <person name="Kuhara S."/>
            <person name="Hattori M."/>
            <person name="Ohta T."/>
        </authorList>
    </citation>
    <scope>NUCLEOTIDE SEQUENCE [LARGE SCALE GENOMIC DNA]</scope>
    <source>
        <strain>ATCC 15305 / DSM 20229 / NCIMB 8711 / NCTC 7292 / S-41</strain>
    </source>
</reference>
<name>RL13_STAS1</name>
<gene>
    <name evidence="1" type="primary">rplM</name>
    <name type="ordered locus">SSP0695</name>
</gene>
<dbReference type="EMBL" id="AP008934">
    <property type="protein sequence ID" value="BAE17840.1"/>
    <property type="molecule type" value="Genomic_DNA"/>
</dbReference>
<dbReference type="RefSeq" id="WP_011302611.1">
    <property type="nucleotide sequence ID" value="NZ_MTGA01000036.1"/>
</dbReference>
<dbReference type="SMR" id="Q49ZD6"/>
<dbReference type="GeneID" id="3615994"/>
<dbReference type="KEGG" id="ssp:SSP0695"/>
<dbReference type="PATRIC" id="fig|342451.11.peg.697"/>
<dbReference type="eggNOG" id="COG0102">
    <property type="taxonomic scope" value="Bacteria"/>
</dbReference>
<dbReference type="HOGENOM" id="CLU_082184_2_2_9"/>
<dbReference type="OrthoDB" id="9801330at2"/>
<dbReference type="Proteomes" id="UP000006371">
    <property type="component" value="Chromosome"/>
</dbReference>
<dbReference type="GO" id="GO:0022625">
    <property type="term" value="C:cytosolic large ribosomal subunit"/>
    <property type="evidence" value="ECO:0007669"/>
    <property type="project" value="TreeGrafter"/>
</dbReference>
<dbReference type="GO" id="GO:0003729">
    <property type="term" value="F:mRNA binding"/>
    <property type="evidence" value="ECO:0007669"/>
    <property type="project" value="TreeGrafter"/>
</dbReference>
<dbReference type="GO" id="GO:0003735">
    <property type="term" value="F:structural constituent of ribosome"/>
    <property type="evidence" value="ECO:0007669"/>
    <property type="project" value="InterPro"/>
</dbReference>
<dbReference type="GO" id="GO:0017148">
    <property type="term" value="P:negative regulation of translation"/>
    <property type="evidence" value="ECO:0007669"/>
    <property type="project" value="TreeGrafter"/>
</dbReference>
<dbReference type="GO" id="GO:0006412">
    <property type="term" value="P:translation"/>
    <property type="evidence" value="ECO:0007669"/>
    <property type="project" value="UniProtKB-UniRule"/>
</dbReference>
<dbReference type="CDD" id="cd00392">
    <property type="entry name" value="Ribosomal_L13"/>
    <property type="match status" value="1"/>
</dbReference>
<dbReference type="FunFam" id="3.90.1180.10:FF:000001">
    <property type="entry name" value="50S ribosomal protein L13"/>
    <property type="match status" value="1"/>
</dbReference>
<dbReference type="Gene3D" id="3.90.1180.10">
    <property type="entry name" value="Ribosomal protein L13"/>
    <property type="match status" value="1"/>
</dbReference>
<dbReference type="HAMAP" id="MF_01366">
    <property type="entry name" value="Ribosomal_uL13"/>
    <property type="match status" value="1"/>
</dbReference>
<dbReference type="InterPro" id="IPR005822">
    <property type="entry name" value="Ribosomal_uL13"/>
</dbReference>
<dbReference type="InterPro" id="IPR005823">
    <property type="entry name" value="Ribosomal_uL13_bac-type"/>
</dbReference>
<dbReference type="InterPro" id="IPR023563">
    <property type="entry name" value="Ribosomal_uL13_CS"/>
</dbReference>
<dbReference type="InterPro" id="IPR036899">
    <property type="entry name" value="Ribosomal_uL13_sf"/>
</dbReference>
<dbReference type="NCBIfam" id="TIGR01066">
    <property type="entry name" value="rplM_bact"/>
    <property type="match status" value="1"/>
</dbReference>
<dbReference type="PANTHER" id="PTHR11545:SF2">
    <property type="entry name" value="LARGE RIBOSOMAL SUBUNIT PROTEIN UL13M"/>
    <property type="match status" value="1"/>
</dbReference>
<dbReference type="PANTHER" id="PTHR11545">
    <property type="entry name" value="RIBOSOMAL PROTEIN L13"/>
    <property type="match status" value="1"/>
</dbReference>
<dbReference type="Pfam" id="PF00572">
    <property type="entry name" value="Ribosomal_L13"/>
    <property type="match status" value="1"/>
</dbReference>
<dbReference type="PIRSF" id="PIRSF002181">
    <property type="entry name" value="Ribosomal_L13"/>
    <property type="match status" value="1"/>
</dbReference>
<dbReference type="SUPFAM" id="SSF52161">
    <property type="entry name" value="Ribosomal protein L13"/>
    <property type="match status" value="1"/>
</dbReference>
<dbReference type="PROSITE" id="PS00783">
    <property type="entry name" value="RIBOSOMAL_L13"/>
    <property type="match status" value="1"/>
</dbReference>
<comment type="function">
    <text evidence="1">This protein is one of the early assembly proteins of the 50S ribosomal subunit, although it is not seen to bind rRNA by itself. It is important during the early stages of 50S assembly.</text>
</comment>
<comment type="subunit">
    <text evidence="1">Part of the 50S ribosomal subunit.</text>
</comment>
<comment type="similarity">
    <text evidence="1">Belongs to the universal ribosomal protein uL13 family.</text>
</comment>
<keyword id="KW-1185">Reference proteome</keyword>
<keyword id="KW-0687">Ribonucleoprotein</keyword>
<keyword id="KW-0689">Ribosomal protein</keyword>
<feature type="chain" id="PRO_0000223983" description="Large ribosomal subunit protein uL13">
    <location>
        <begin position="1"/>
        <end position="145"/>
    </location>
</feature>